<proteinExistence type="inferred from homology"/>
<name>SECA_PROM0</name>
<sequence length="943" mass="108083">MLKLLLGDPNTRKLKRYQPIVEEINFLEEEISQLTDDELRKETQNLKSTISAELDLKKQKELLEEFLPKAFAIVREASKRVLDMRHFDVQLIGGIVLNECQIAEMKTGEGKTLVATLPCYLNALTGKGVHVVTVNDYLARRDAEWMGQVHRFLGLSVGLIQQDMNPLERKKNYDCDITYATNSELGFDYLRDNMATDINEVVQRKFNYCVIDEVDSILIDEARTPLIISGQVERPQEKYQKAAELSLELLKAKELSKDGIDPEGDYEVDEKQRSCILTDQGFAKCEEYLGVSDLYNPQDPWAHYITNALKAKELFIKDVNYIIKNEEAVIVDEFTGRVMPGRRWSDGQHQAIEAKESLKIQPETQTLASITYQNFFLLYPGLAGMTGTAKTEEVEFEKTYKLESTVIPTNQTRKRQDWSDQVFKTEIGKWKAVAKETAQIHREGRPVLVGTTSVEKSELLSSLLSEEKIPHNLLNAKPENVEREAEIVAQAGRAGAVTIATNMAGRGTDIILGGNSDYMARLKLKEILVPLLVKPDNEHKPPIPKQRSSKSKGGFSKKAVTNLKKNISNSSTSLFPCKLDEAFEKKLSVLSDELVKSWGDRQLSVLELDDRIATAAEKAPTDDNSIKLLRESLSDVKKEYEKVLIHEEEKVREAGGLHVIGTERHESRRVDNQLRGRAGRQGDLGSTRFFLSLDDNLLRIFGGDRVANLMNAFRVDEDMPIESGMLTRSLESAQKKVETYYYDIRKQVFEYDEVMNNQRKAVYGERLRVLKGIDLKRQVIGYGERTMIEIVDAYINPDLPPEEWNIDQLISKVKEFIYLLDDLKSDDINLLSIEELKNYLQEQLRIAYDLKESQIEKIRPGLMREAERFFILQQIDNLWREHLQSMDSLRESVGLRGYGQKDPLIEYKNEGYDMFLEMMTNMRRNVIYSMFMFQPKTDVNEKN</sequence>
<gene>
    <name evidence="1" type="primary">secA</name>
    <name type="ordered locus">P9301_18301</name>
</gene>
<evidence type="ECO:0000255" key="1">
    <source>
        <dbReference type="HAMAP-Rule" id="MF_01382"/>
    </source>
</evidence>
<evidence type="ECO:0000256" key="2">
    <source>
        <dbReference type="SAM" id="MobiDB-lite"/>
    </source>
</evidence>
<accession>A3PFC8</accession>
<reference key="1">
    <citation type="journal article" date="2007" name="PLoS Genet.">
        <title>Patterns and implications of gene gain and loss in the evolution of Prochlorococcus.</title>
        <authorList>
            <person name="Kettler G.C."/>
            <person name="Martiny A.C."/>
            <person name="Huang K."/>
            <person name="Zucker J."/>
            <person name="Coleman M.L."/>
            <person name="Rodrigue S."/>
            <person name="Chen F."/>
            <person name="Lapidus A."/>
            <person name="Ferriera S."/>
            <person name="Johnson J."/>
            <person name="Steglich C."/>
            <person name="Church G.M."/>
            <person name="Richardson P."/>
            <person name="Chisholm S.W."/>
        </authorList>
    </citation>
    <scope>NUCLEOTIDE SEQUENCE [LARGE SCALE GENOMIC DNA]</scope>
    <source>
        <strain>MIT 9301</strain>
    </source>
</reference>
<keyword id="KW-0067">ATP-binding</keyword>
<keyword id="KW-0997">Cell inner membrane</keyword>
<keyword id="KW-1003">Cell membrane</keyword>
<keyword id="KW-0963">Cytoplasm</keyword>
<keyword id="KW-0472">Membrane</keyword>
<keyword id="KW-0547">Nucleotide-binding</keyword>
<keyword id="KW-0653">Protein transport</keyword>
<keyword id="KW-1185">Reference proteome</keyword>
<keyword id="KW-0793">Thylakoid</keyword>
<keyword id="KW-1278">Translocase</keyword>
<keyword id="KW-0811">Translocation</keyword>
<keyword id="KW-0813">Transport</keyword>
<feature type="chain" id="PRO_0000318406" description="Protein translocase subunit SecA">
    <location>
        <begin position="1"/>
        <end position="943"/>
    </location>
</feature>
<feature type="region of interest" description="Disordered" evidence="2">
    <location>
        <begin position="537"/>
        <end position="556"/>
    </location>
</feature>
<feature type="binding site" evidence="1">
    <location>
        <position position="90"/>
    </location>
    <ligand>
        <name>ATP</name>
        <dbReference type="ChEBI" id="CHEBI:30616"/>
    </ligand>
</feature>
<feature type="binding site" evidence="1">
    <location>
        <begin position="108"/>
        <end position="112"/>
    </location>
    <ligand>
        <name>ATP</name>
        <dbReference type="ChEBI" id="CHEBI:30616"/>
    </ligand>
</feature>
<feature type="binding site" evidence="1">
    <location>
        <position position="509"/>
    </location>
    <ligand>
        <name>ATP</name>
        <dbReference type="ChEBI" id="CHEBI:30616"/>
    </ligand>
</feature>
<organism>
    <name type="scientific">Prochlorococcus marinus (strain MIT 9301)</name>
    <dbReference type="NCBI Taxonomy" id="167546"/>
    <lineage>
        <taxon>Bacteria</taxon>
        <taxon>Bacillati</taxon>
        <taxon>Cyanobacteriota</taxon>
        <taxon>Cyanophyceae</taxon>
        <taxon>Synechococcales</taxon>
        <taxon>Prochlorococcaceae</taxon>
        <taxon>Prochlorococcus</taxon>
    </lineage>
</organism>
<comment type="function">
    <text evidence="1">Part of the Sec protein translocase complex. Interacts with the SecYEG preprotein conducting channel. Has a central role in coupling the hydrolysis of ATP to the transfer of proteins into and across the cell membrane, serving as an ATP-driven molecular motor driving the stepwise translocation of polypeptide chains across the membrane.</text>
</comment>
<comment type="function">
    <text evidence="1">Probably participates in protein translocation into and across both the cytoplasmic and thylakoid membranes in cyanobacterial cells.</text>
</comment>
<comment type="catalytic activity">
    <reaction evidence="1">
        <text>ATP + H2O + cellular proteinSide 1 = ADP + phosphate + cellular proteinSide 2.</text>
        <dbReference type="EC" id="7.4.2.8"/>
    </reaction>
</comment>
<comment type="subunit">
    <text evidence="1">Monomer and homodimer. Part of the essential Sec protein translocation apparatus which comprises SecA, SecYEG and auxiliary proteins SecDF. Other proteins may also be involved.</text>
</comment>
<comment type="subcellular location">
    <subcellularLocation>
        <location evidence="1">Cell inner membrane</location>
        <topology evidence="1">Peripheral membrane protein</topology>
        <orientation evidence="1">Cytoplasmic side</orientation>
    </subcellularLocation>
    <subcellularLocation>
        <location evidence="1">Cellular thylakoid membrane</location>
        <topology evidence="1">Peripheral membrane protein</topology>
        <orientation evidence="1">Cytoplasmic side</orientation>
    </subcellularLocation>
    <subcellularLocation>
        <location evidence="1">Cytoplasm</location>
    </subcellularLocation>
</comment>
<comment type="similarity">
    <text evidence="1">Belongs to the SecA family.</text>
</comment>
<protein>
    <recommendedName>
        <fullName evidence="1">Protein translocase subunit SecA</fullName>
        <ecNumber evidence="1">7.4.2.8</ecNumber>
    </recommendedName>
</protein>
<dbReference type="EC" id="7.4.2.8" evidence="1"/>
<dbReference type="EMBL" id="CP000576">
    <property type="protein sequence ID" value="ABO18453.1"/>
    <property type="molecule type" value="Genomic_DNA"/>
</dbReference>
<dbReference type="SMR" id="A3PFC8"/>
<dbReference type="STRING" id="167546.P9301_18301"/>
<dbReference type="KEGG" id="pmg:P9301_18301"/>
<dbReference type="eggNOG" id="COG0653">
    <property type="taxonomic scope" value="Bacteria"/>
</dbReference>
<dbReference type="HOGENOM" id="CLU_005314_3_0_3"/>
<dbReference type="Proteomes" id="UP000001430">
    <property type="component" value="Chromosome"/>
</dbReference>
<dbReference type="GO" id="GO:0031522">
    <property type="term" value="C:cell envelope Sec protein transport complex"/>
    <property type="evidence" value="ECO:0007669"/>
    <property type="project" value="TreeGrafter"/>
</dbReference>
<dbReference type="GO" id="GO:0005829">
    <property type="term" value="C:cytosol"/>
    <property type="evidence" value="ECO:0007669"/>
    <property type="project" value="TreeGrafter"/>
</dbReference>
<dbReference type="GO" id="GO:0031676">
    <property type="term" value="C:plasma membrane-derived thylakoid membrane"/>
    <property type="evidence" value="ECO:0007669"/>
    <property type="project" value="UniProtKB-SubCell"/>
</dbReference>
<dbReference type="GO" id="GO:0005524">
    <property type="term" value="F:ATP binding"/>
    <property type="evidence" value="ECO:0007669"/>
    <property type="project" value="UniProtKB-UniRule"/>
</dbReference>
<dbReference type="GO" id="GO:0008564">
    <property type="term" value="F:protein-exporting ATPase activity"/>
    <property type="evidence" value="ECO:0007669"/>
    <property type="project" value="UniProtKB-EC"/>
</dbReference>
<dbReference type="GO" id="GO:0065002">
    <property type="term" value="P:intracellular protein transmembrane transport"/>
    <property type="evidence" value="ECO:0007669"/>
    <property type="project" value="UniProtKB-UniRule"/>
</dbReference>
<dbReference type="GO" id="GO:0017038">
    <property type="term" value="P:protein import"/>
    <property type="evidence" value="ECO:0007669"/>
    <property type="project" value="InterPro"/>
</dbReference>
<dbReference type="GO" id="GO:0006605">
    <property type="term" value="P:protein targeting"/>
    <property type="evidence" value="ECO:0007669"/>
    <property type="project" value="UniProtKB-UniRule"/>
</dbReference>
<dbReference type="GO" id="GO:0043952">
    <property type="term" value="P:protein transport by the Sec complex"/>
    <property type="evidence" value="ECO:0007669"/>
    <property type="project" value="TreeGrafter"/>
</dbReference>
<dbReference type="CDD" id="cd17928">
    <property type="entry name" value="DEXDc_SecA"/>
    <property type="match status" value="1"/>
</dbReference>
<dbReference type="CDD" id="cd18803">
    <property type="entry name" value="SF2_C_secA"/>
    <property type="match status" value="1"/>
</dbReference>
<dbReference type="FunFam" id="3.90.1440.10:FF:000003">
    <property type="entry name" value="Preprotein translocase SecA subunit"/>
    <property type="match status" value="1"/>
</dbReference>
<dbReference type="FunFam" id="3.40.50.300:FF:000429">
    <property type="entry name" value="Preprotein translocase subunit SecA"/>
    <property type="match status" value="1"/>
</dbReference>
<dbReference type="FunFam" id="1.10.3060.10:FF:000003">
    <property type="entry name" value="Protein translocase subunit SecA"/>
    <property type="match status" value="1"/>
</dbReference>
<dbReference type="Gene3D" id="1.10.3060.10">
    <property type="entry name" value="Helical scaffold and wing domains of SecA"/>
    <property type="match status" value="1"/>
</dbReference>
<dbReference type="Gene3D" id="3.40.50.300">
    <property type="entry name" value="P-loop containing nucleotide triphosphate hydrolases"/>
    <property type="match status" value="2"/>
</dbReference>
<dbReference type="Gene3D" id="3.90.1440.10">
    <property type="entry name" value="SecA, preprotein cross-linking domain"/>
    <property type="match status" value="1"/>
</dbReference>
<dbReference type="HAMAP" id="MF_01382">
    <property type="entry name" value="SecA"/>
    <property type="match status" value="1"/>
</dbReference>
<dbReference type="InterPro" id="IPR014001">
    <property type="entry name" value="Helicase_ATP-bd"/>
</dbReference>
<dbReference type="InterPro" id="IPR027417">
    <property type="entry name" value="P-loop_NTPase"/>
</dbReference>
<dbReference type="InterPro" id="IPR000185">
    <property type="entry name" value="SecA"/>
</dbReference>
<dbReference type="InterPro" id="IPR020937">
    <property type="entry name" value="SecA_CS"/>
</dbReference>
<dbReference type="InterPro" id="IPR011115">
    <property type="entry name" value="SecA_DEAD"/>
</dbReference>
<dbReference type="InterPro" id="IPR014018">
    <property type="entry name" value="SecA_motor_DEAD"/>
</dbReference>
<dbReference type="InterPro" id="IPR011130">
    <property type="entry name" value="SecA_preprotein_X-link_dom"/>
</dbReference>
<dbReference type="InterPro" id="IPR044722">
    <property type="entry name" value="SecA_SF2_C"/>
</dbReference>
<dbReference type="InterPro" id="IPR011116">
    <property type="entry name" value="SecA_Wing/Scaffold"/>
</dbReference>
<dbReference type="InterPro" id="IPR036266">
    <property type="entry name" value="SecA_Wing/Scaffold_sf"/>
</dbReference>
<dbReference type="InterPro" id="IPR036670">
    <property type="entry name" value="SecA_X-link_sf"/>
</dbReference>
<dbReference type="NCBIfam" id="TIGR00963">
    <property type="entry name" value="secA"/>
    <property type="match status" value="1"/>
</dbReference>
<dbReference type="PANTHER" id="PTHR30612:SF0">
    <property type="entry name" value="CHLOROPLAST PROTEIN-TRANSPORTING ATPASE"/>
    <property type="match status" value="1"/>
</dbReference>
<dbReference type="PANTHER" id="PTHR30612">
    <property type="entry name" value="SECA INNER MEMBRANE COMPONENT OF SEC PROTEIN SECRETION SYSTEM"/>
    <property type="match status" value="1"/>
</dbReference>
<dbReference type="Pfam" id="PF21090">
    <property type="entry name" value="P-loop_SecA"/>
    <property type="match status" value="1"/>
</dbReference>
<dbReference type="Pfam" id="PF07517">
    <property type="entry name" value="SecA_DEAD"/>
    <property type="match status" value="1"/>
</dbReference>
<dbReference type="Pfam" id="PF01043">
    <property type="entry name" value="SecA_PP_bind"/>
    <property type="match status" value="1"/>
</dbReference>
<dbReference type="Pfam" id="PF07516">
    <property type="entry name" value="SecA_SW"/>
    <property type="match status" value="1"/>
</dbReference>
<dbReference type="PRINTS" id="PR00906">
    <property type="entry name" value="SECA"/>
</dbReference>
<dbReference type="SMART" id="SM00957">
    <property type="entry name" value="SecA_DEAD"/>
    <property type="match status" value="1"/>
</dbReference>
<dbReference type="SMART" id="SM00958">
    <property type="entry name" value="SecA_PP_bind"/>
    <property type="match status" value="1"/>
</dbReference>
<dbReference type="SUPFAM" id="SSF81886">
    <property type="entry name" value="Helical scaffold and wing domains of SecA"/>
    <property type="match status" value="1"/>
</dbReference>
<dbReference type="SUPFAM" id="SSF52540">
    <property type="entry name" value="P-loop containing nucleoside triphosphate hydrolases"/>
    <property type="match status" value="2"/>
</dbReference>
<dbReference type="SUPFAM" id="SSF81767">
    <property type="entry name" value="Pre-protein crosslinking domain of SecA"/>
    <property type="match status" value="1"/>
</dbReference>
<dbReference type="PROSITE" id="PS01312">
    <property type="entry name" value="SECA"/>
    <property type="match status" value="1"/>
</dbReference>
<dbReference type="PROSITE" id="PS51196">
    <property type="entry name" value="SECA_MOTOR_DEAD"/>
    <property type="match status" value="1"/>
</dbReference>